<evidence type="ECO:0000255" key="1">
    <source>
        <dbReference type="HAMAP-Rule" id="MF_02075"/>
    </source>
</evidence>
<accession>A4G0V5</accession>
<name>SYDND_METM5</name>
<proteinExistence type="inferred from homology"/>
<organism>
    <name type="scientific">Methanococcus maripaludis (strain C5 / ATCC BAA-1333)</name>
    <dbReference type="NCBI Taxonomy" id="402880"/>
    <lineage>
        <taxon>Archaea</taxon>
        <taxon>Methanobacteriati</taxon>
        <taxon>Methanobacteriota</taxon>
        <taxon>Methanomada group</taxon>
        <taxon>Methanococci</taxon>
        <taxon>Methanococcales</taxon>
        <taxon>Methanococcaceae</taxon>
        <taxon>Methanococcus</taxon>
    </lineage>
</organism>
<feature type="chain" id="PRO_1000006705" description="Aspartate--tRNA(Asp/Asn) ligase">
    <location>
        <begin position="1"/>
        <end position="438"/>
    </location>
</feature>
<feature type="region of interest" description="Aspartate" evidence="1">
    <location>
        <begin position="198"/>
        <end position="201"/>
    </location>
</feature>
<feature type="binding site" evidence="1">
    <location>
        <position position="176"/>
    </location>
    <ligand>
        <name>L-aspartate</name>
        <dbReference type="ChEBI" id="CHEBI:29991"/>
    </ligand>
</feature>
<feature type="binding site" evidence="1">
    <location>
        <begin position="220"/>
        <end position="222"/>
    </location>
    <ligand>
        <name>ATP</name>
        <dbReference type="ChEBI" id="CHEBI:30616"/>
    </ligand>
</feature>
<feature type="binding site" evidence="1">
    <location>
        <position position="220"/>
    </location>
    <ligand>
        <name>L-aspartate</name>
        <dbReference type="ChEBI" id="CHEBI:29991"/>
    </ligand>
</feature>
<feature type="binding site" evidence="1">
    <location>
        <begin position="228"/>
        <end position="230"/>
    </location>
    <ligand>
        <name>ATP</name>
        <dbReference type="ChEBI" id="CHEBI:30616"/>
    </ligand>
</feature>
<feature type="binding site" evidence="1">
    <location>
        <position position="361"/>
    </location>
    <ligand>
        <name>ATP</name>
        <dbReference type="ChEBI" id="CHEBI:30616"/>
    </ligand>
</feature>
<feature type="binding site" evidence="1">
    <location>
        <position position="361"/>
    </location>
    <ligand>
        <name>Mg(2+)</name>
        <dbReference type="ChEBI" id="CHEBI:18420"/>
        <label>2</label>
    </ligand>
</feature>
<feature type="binding site" evidence="1">
    <location>
        <position position="361"/>
    </location>
    <ligand>
        <name>Mg(2+)</name>
        <dbReference type="ChEBI" id="CHEBI:18420"/>
        <label>3</label>
    </ligand>
</feature>
<feature type="binding site" evidence="1">
    <location>
        <position position="364"/>
    </location>
    <ligand>
        <name>L-aspartate</name>
        <dbReference type="ChEBI" id="CHEBI:29991"/>
    </ligand>
</feature>
<feature type="binding site" evidence="1">
    <location>
        <position position="364"/>
    </location>
    <ligand>
        <name>Mg(2+)</name>
        <dbReference type="ChEBI" id="CHEBI:18420"/>
        <label>2</label>
    </ligand>
</feature>
<feature type="binding site" evidence="1">
    <location>
        <position position="368"/>
    </location>
    <ligand>
        <name>L-aspartate</name>
        <dbReference type="ChEBI" id="CHEBI:29991"/>
    </ligand>
</feature>
<feature type="binding site" evidence="1">
    <location>
        <begin position="409"/>
        <end position="412"/>
    </location>
    <ligand>
        <name>ATP</name>
        <dbReference type="ChEBI" id="CHEBI:30616"/>
    </ligand>
</feature>
<feature type="site" description="Important for tRNA non-discrimination" evidence="1">
    <location>
        <position position="91"/>
    </location>
</feature>
<sequence length="438" mass="50157">MYLIADWRRTHYSEEVIPEMDGQEVILMGWVHSIRALGKLAFVILRDREGTIQAVVPKQKVDEETFAIAKKLGKEDIIAIRGKVVANEKAPKGFEVIPIEIRVLNKADAPLPLDPSEKVAAEIDTRLDKRFLDIRRPKIQAIFKIRSEMLRSIRKTFADGGFVEVNTPKLVASATEGGTELFPISYFEKEAFLGQSPQLYKQMMMAGGFDKVFEIAQIFRAEEHNTRRHLNEAISIDTEMSFVNEKDAMAMLEKVVYNCYADIEYNRPQEIELLELNWEIPEKTFDKITYTEAIDIANAKGVEIEWGEDLSRAAERAVGDEMGGLYFITEWPTQTRPFYTLPHKHDNKVCKAFDLMYKELEISSGAQRVHKYDLLVENISNMGMNPDSFETYLEAFKFGMPPHAGWGLGADRFAMVLTAQDNIRECVLFPRDRQRLTP</sequence>
<protein>
    <recommendedName>
        <fullName evidence="1">Aspartate--tRNA(Asp/Asn) ligase</fullName>
        <ecNumber evidence="1">6.1.1.23</ecNumber>
    </recommendedName>
    <alternativeName>
        <fullName evidence="1">Aspartyl-tRNA synthetase</fullName>
        <shortName evidence="1">AspRS</shortName>
    </alternativeName>
    <alternativeName>
        <fullName evidence="1">Non-discriminating aspartyl-tRNA synthetase</fullName>
        <shortName evidence="1">ND-AspRS</shortName>
    </alternativeName>
</protein>
<gene>
    <name evidence="1" type="primary">aspS</name>
    <name type="ordered locus">MmarC5_1792</name>
</gene>
<dbReference type="EC" id="6.1.1.23" evidence="1"/>
<dbReference type="EMBL" id="CP000609">
    <property type="protein sequence ID" value="ABO36089.1"/>
    <property type="molecule type" value="Genomic_DNA"/>
</dbReference>
<dbReference type="RefSeq" id="WP_011869534.1">
    <property type="nucleotide sequence ID" value="NC_009135.1"/>
</dbReference>
<dbReference type="SMR" id="A4G0V5"/>
<dbReference type="STRING" id="402880.MmarC5_1792"/>
<dbReference type="GeneID" id="4927917"/>
<dbReference type="KEGG" id="mmq:MmarC5_1792"/>
<dbReference type="eggNOG" id="arCOG00406">
    <property type="taxonomic scope" value="Archaea"/>
</dbReference>
<dbReference type="HOGENOM" id="CLU_004553_2_1_2"/>
<dbReference type="OrthoDB" id="5908at2157"/>
<dbReference type="Proteomes" id="UP000000253">
    <property type="component" value="Chromosome"/>
</dbReference>
<dbReference type="GO" id="GO:0017101">
    <property type="term" value="C:aminoacyl-tRNA synthetase multienzyme complex"/>
    <property type="evidence" value="ECO:0007669"/>
    <property type="project" value="TreeGrafter"/>
</dbReference>
<dbReference type="GO" id="GO:0005829">
    <property type="term" value="C:cytosol"/>
    <property type="evidence" value="ECO:0007669"/>
    <property type="project" value="TreeGrafter"/>
</dbReference>
<dbReference type="GO" id="GO:0004815">
    <property type="term" value="F:aspartate-tRNA ligase activity"/>
    <property type="evidence" value="ECO:0007669"/>
    <property type="project" value="UniProtKB-UniRule"/>
</dbReference>
<dbReference type="GO" id="GO:0050560">
    <property type="term" value="F:aspartate-tRNA(Asn) ligase activity"/>
    <property type="evidence" value="ECO:0007669"/>
    <property type="project" value="UniProtKB-EC"/>
</dbReference>
<dbReference type="GO" id="GO:0005524">
    <property type="term" value="F:ATP binding"/>
    <property type="evidence" value="ECO:0007669"/>
    <property type="project" value="UniProtKB-UniRule"/>
</dbReference>
<dbReference type="GO" id="GO:0000287">
    <property type="term" value="F:magnesium ion binding"/>
    <property type="evidence" value="ECO:0007669"/>
    <property type="project" value="UniProtKB-UniRule"/>
</dbReference>
<dbReference type="GO" id="GO:0003723">
    <property type="term" value="F:RNA binding"/>
    <property type="evidence" value="ECO:0007669"/>
    <property type="project" value="TreeGrafter"/>
</dbReference>
<dbReference type="GO" id="GO:0006422">
    <property type="term" value="P:aspartyl-tRNA aminoacylation"/>
    <property type="evidence" value="ECO:0007669"/>
    <property type="project" value="UniProtKB-UniRule"/>
</dbReference>
<dbReference type="CDD" id="cd00776">
    <property type="entry name" value="AsxRS_core"/>
    <property type="match status" value="1"/>
</dbReference>
<dbReference type="CDD" id="cd04316">
    <property type="entry name" value="ND_PkAspRS_like_N"/>
    <property type="match status" value="1"/>
</dbReference>
<dbReference type="FunFam" id="3.30.930.10:FF:000038">
    <property type="entry name" value="Aspartate--tRNA ligase"/>
    <property type="match status" value="1"/>
</dbReference>
<dbReference type="Gene3D" id="3.30.930.10">
    <property type="entry name" value="Bira Bifunctional Protein, Domain 2"/>
    <property type="match status" value="1"/>
</dbReference>
<dbReference type="Gene3D" id="2.40.50.140">
    <property type="entry name" value="Nucleic acid-binding proteins"/>
    <property type="match status" value="1"/>
</dbReference>
<dbReference type="HAMAP" id="MF_02075">
    <property type="entry name" value="Asp_tRNA_synth_type2"/>
    <property type="match status" value="1"/>
</dbReference>
<dbReference type="InterPro" id="IPR004364">
    <property type="entry name" value="Aa-tRNA-synt_II"/>
</dbReference>
<dbReference type="InterPro" id="IPR006195">
    <property type="entry name" value="aa-tRNA-synth_II"/>
</dbReference>
<dbReference type="InterPro" id="IPR045864">
    <property type="entry name" value="aa-tRNA-synth_II/BPL/LPL"/>
</dbReference>
<dbReference type="InterPro" id="IPR004523">
    <property type="entry name" value="Asp-tRNA_synthase_2"/>
</dbReference>
<dbReference type="InterPro" id="IPR002312">
    <property type="entry name" value="Asp/Asn-tRNA-synth_IIb"/>
</dbReference>
<dbReference type="InterPro" id="IPR012340">
    <property type="entry name" value="NA-bd_OB-fold"/>
</dbReference>
<dbReference type="InterPro" id="IPR004365">
    <property type="entry name" value="NA-bd_OB_tRNA"/>
</dbReference>
<dbReference type="NCBIfam" id="TIGR00458">
    <property type="entry name" value="aspS_nondisc"/>
    <property type="match status" value="1"/>
</dbReference>
<dbReference type="NCBIfam" id="NF003483">
    <property type="entry name" value="PRK05159.1"/>
    <property type="match status" value="1"/>
</dbReference>
<dbReference type="PANTHER" id="PTHR43450:SF1">
    <property type="entry name" value="ASPARTATE--TRNA LIGASE, CYTOPLASMIC"/>
    <property type="match status" value="1"/>
</dbReference>
<dbReference type="PANTHER" id="PTHR43450">
    <property type="entry name" value="ASPARTYL-TRNA SYNTHETASE"/>
    <property type="match status" value="1"/>
</dbReference>
<dbReference type="Pfam" id="PF00152">
    <property type="entry name" value="tRNA-synt_2"/>
    <property type="match status" value="1"/>
</dbReference>
<dbReference type="Pfam" id="PF01336">
    <property type="entry name" value="tRNA_anti-codon"/>
    <property type="match status" value="1"/>
</dbReference>
<dbReference type="PRINTS" id="PR01042">
    <property type="entry name" value="TRNASYNTHASP"/>
</dbReference>
<dbReference type="SUPFAM" id="SSF55681">
    <property type="entry name" value="Class II aaRS and biotin synthetases"/>
    <property type="match status" value="1"/>
</dbReference>
<dbReference type="SUPFAM" id="SSF50249">
    <property type="entry name" value="Nucleic acid-binding proteins"/>
    <property type="match status" value="1"/>
</dbReference>
<dbReference type="PROSITE" id="PS50862">
    <property type="entry name" value="AA_TRNA_LIGASE_II"/>
    <property type="match status" value="1"/>
</dbReference>
<keyword id="KW-0030">Aminoacyl-tRNA synthetase</keyword>
<keyword id="KW-0067">ATP-binding</keyword>
<keyword id="KW-0963">Cytoplasm</keyword>
<keyword id="KW-0436">Ligase</keyword>
<keyword id="KW-0460">Magnesium</keyword>
<keyword id="KW-0479">Metal-binding</keyword>
<keyword id="KW-0547">Nucleotide-binding</keyword>
<keyword id="KW-0648">Protein biosynthesis</keyword>
<comment type="function">
    <text evidence="1">Aspartyl-tRNA synthetase with relaxed tRNA specificity since it is able to aspartylate not only its cognate tRNA(Asp) but also tRNA(Asn). Reaction proceeds in two steps: L-aspartate is first activated by ATP to form Asp-AMP and then transferred to the acceptor end of tRNA(Asp/Asn).</text>
</comment>
<comment type="catalytic activity">
    <reaction evidence="1">
        <text>tRNA(Asx) + L-aspartate + ATP = L-aspartyl-tRNA(Asx) + AMP + diphosphate</text>
        <dbReference type="Rhea" id="RHEA:18349"/>
        <dbReference type="Rhea" id="RHEA-COMP:9710"/>
        <dbReference type="Rhea" id="RHEA-COMP:9711"/>
        <dbReference type="ChEBI" id="CHEBI:29991"/>
        <dbReference type="ChEBI" id="CHEBI:30616"/>
        <dbReference type="ChEBI" id="CHEBI:33019"/>
        <dbReference type="ChEBI" id="CHEBI:78442"/>
        <dbReference type="ChEBI" id="CHEBI:78516"/>
        <dbReference type="ChEBI" id="CHEBI:456215"/>
        <dbReference type="EC" id="6.1.1.23"/>
    </reaction>
</comment>
<comment type="cofactor">
    <cofactor evidence="1">
        <name>Mg(2+)</name>
        <dbReference type="ChEBI" id="CHEBI:18420"/>
    </cofactor>
    <text evidence="1">Binds 3 Mg(2+) cations per subunit. The strongest magnesium site (Mg1) is bound to the beta- and gamma-phosphates of ATP and four water molecules complete its coordination sphere.</text>
</comment>
<comment type="subunit">
    <text evidence="1">Homodimer.</text>
</comment>
<comment type="subcellular location">
    <subcellularLocation>
        <location evidence="1">Cytoplasm</location>
    </subcellularLocation>
</comment>
<comment type="similarity">
    <text evidence="1">Belongs to the class-II aminoacyl-tRNA synthetase family. Type 2 subfamily.</text>
</comment>
<reference key="1">
    <citation type="submission" date="2007-03" db="EMBL/GenBank/DDBJ databases">
        <title>Complete sequence of chromosome of Methanococcus maripaludis C5.</title>
        <authorList>
            <consortium name="US DOE Joint Genome Institute"/>
            <person name="Copeland A."/>
            <person name="Lucas S."/>
            <person name="Lapidus A."/>
            <person name="Barry K."/>
            <person name="Glavina del Rio T."/>
            <person name="Dalin E."/>
            <person name="Tice H."/>
            <person name="Pitluck S."/>
            <person name="Chertkov O."/>
            <person name="Brettin T."/>
            <person name="Bruce D."/>
            <person name="Han C."/>
            <person name="Detter J.C."/>
            <person name="Schmutz J."/>
            <person name="Larimer F."/>
            <person name="Land M."/>
            <person name="Hauser L."/>
            <person name="Kyrpides N."/>
            <person name="Mikhailova N."/>
            <person name="Sieprawska-Lupa M."/>
            <person name="Whitman W.B."/>
            <person name="Richardson P."/>
        </authorList>
    </citation>
    <scope>NUCLEOTIDE SEQUENCE [LARGE SCALE GENOMIC DNA]</scope>
    <source>
        <strain>C5 / ATCC BAA-1333</strain>
    </source>
</reference>